<protein>
    <recommendedName>
        <fullName evidence="1">Fructose-1,6-bisphosphatase class 1</fullName>
        <shortName evidence="1">FBPase class 1</shortName>
        <ecNumber evidence="1">3.1.3.11</ecNumber>
    </recommendedName>
    <alternativeName>
        <fullName evidence="1">D-fructose-1,6-bisphosphate 1-phosphohydrolase class 1</fullName>
    </alternativeName>
</protein>
<feature type="chain" id="PRO_0000364521" description="Fructose-1,6-bisphosphatase class 1">
    <location>
        <begin position="1"/>
        <end position="333"/>
    </location>
</feature>
<feature type="binding site" evidence="1">
    <location>
        <position position="92"/>
    </location>
    <ligand>
        <name>Mg(2+)</name>
        <dbReference type="ChEBI" id="CHEBI:18420"/>
        <label>1</label>
    </ligand>
</feature>
<feature type="binding site" evidence="1">
    <location>
        <position position="113"/>
    </location>
    <ligand>
        <name>Mg(2+)</name>
        <dbReference type="ChEBI" id="CHEBI:18420"/>
        <label>1</label>
    </ligand>
</feature>
<feature type="binding site" evidence="1">
    <location>
        <position position="113"/>
    </location>
    <ligand>
        <name>Mg(2+)</name>
        <dbReference type="ChEBI" id="CHEBI:18420"/>
        <label>2</label>
    </ligand>
</feature>
<feature type="binding site" evidence="1">
    <location>
        <position position="115"/>
    </location>
    <ligand>
        <name>Mg(2+)</name>
        <dbReference type="ChEBI" id="CHEBI:18420"/>
        <label>1</label>
    </ligand>
</feature>
<feature type="binding site" evidence="1">
    <location>
        <begin position="116"/>
        <end position="119"/>
    </location>
    <ligand>
        <name>substrate</name>
    </ligand>
</feature>
<feature type="binding site" evidence="1">
    <location>
        <position position="116"/>
    </location>
    <ligand>
        <name>Mg(2+)</name>
        <dbReference type="ChEBI" id="CHEBI:18420"/>
        <label>2</label>
    </ligand>
</feature>
<feature type="binding site" evidence="1">
    <location>
        <position position="209"/>
    </location>
    <ligand>
        <name>substrate</name>
    </ligand>
</feature>
<feature type="binding site" evidence="1">
    <location>
        <position position="242"/>
    </location>
    <ligand>
        <name>substrate</name>
    </ligand>
</feature>
<feature type="binding site" evidence="1">
    <location>
        <position position="272"/>
    </location>
    <ligand>
        <name>substrate</name>
    </ligand>
</feature>
<feature type="binding site" evidence="1">
    <location>
        <position position="278"/>
    </location>
    <ligand>
        <name>Mg(2+)</name>
        <dbReference type="ChEBI" id="CHEBI:18420"/>
        <label>2</label>
    </ligand>
</feature>
<proteinExistence type="inferred from homology"/>
<gene>
    <name evidence="1" type="primary">fbp</name>
    <name type="ordered locus">Cag_0602</name>
</gene>
<dbReference type="EC" id="3.1.3.11" evidence="1"/>
<dbReference type="EMBL" id="CP000108">
    <property type="protein sequence ID" value="ABB27875.1"/>
    <property type="molecule type" value="Genomic_DNA"/>
</dbReference>
<dbReference type="SMR" id="Q3AT00"/>
<dbReference type="STRING" id="340177.Cag_0602"/>
<dbReference type="KEGG" id="cch:Cag_0602"/>
<dbReference type="eggNOG" id="COG0158">
    <property type="taxonomic scope" value="Bacteria"/>
</dbReference>
<dbReference type="HOGENOM" id="CLU_039977_2_2_10"/>
<dbReference type="OrthoDB" id="9806756at2"/>
<dbReference type="UniPathway" id="UPA00116"/>
<dbReference type="GO" id="GO:0005829">
    <property type="term" value="C:cytosol"/>
    <property type="evidence" value="ECO:0007669"/>
    <property type="project" value="TreeGrafter"/>
</dbReference>
<dbReference type="GO" id="GO:0042132">
    <property type="term" value="F:fructose 1,6-bisphosphate 1-phosphatase activity"/>
    <property type="evidence" value="ECO:0007669"/>
    <property type="project" value="UniProtKB-UniRule"/>
</dbReference>
<dbReference type="GO" id="GO:0000287">
    <property type="term" value="F:magnesium ion binding"/>
    <property type="evidence" value="ECO:0007669"/>
    <property type="project" value="UniProtKB-UniRule"/>
</dbReference>
<dbReference type="GO" id="GO:0030388">
    <property type="term" value="P:fructose 1,6-bisphosphate metabolic process"/>
    <property type="evidence" value="ECO:0007669"/>
    <property type="project" value="TreeGrafter"/>
</dbReference>
<dbReference type="GO" id="GO:0006002">
    <property type="term" value="P:fructose 6-phosphate metabolic process"/>
    <property type="evidence" value="ECO:0007669"/>
    <property type="project" value="TreeGrafter"/>
</dbReference>
<dbReference type="GO" id="GO:0006000">
    <property type="term" value="P:fructose metabolic process"/>
    <property type="evidence" value="ECO:0007669"/>
    <property type="project" value="TreeGrafter"/>
</dbReference>
<dbReference type="GO" id="GO:0006094">
    <property type="term" value="P:gluconeogenesis"/>
    <property type="evidence" value="ECO:0007669"/>
    <property type="project" value="UniProtKB-UniRule"/>
</dbReference>
<dbReference type="GO" id="GO:0019253">
    <property type="term" value="P:reductive pentose-phosphate cycle"/>
    <property type="evidence" value="ECO:0007669"/>
    <property type="project" value="UniProtKB-UniPathway"/>
</dbReference>
<dbReference type="GO" id="GO:0005986">
    <property type="term" value="P:sucrose biosynthetic process"/>
    <property type="evidence" value="ECO:0007669"/>
    <property type="project" value="TreeGrafter"/>
</dbReference>
<dbReference type="CDD" id="cd00354">
    <property type="entry name" value="FBPase"/>
    <property type="match status" value="1"/>
</dbReference>
<dbReference type="FunFam" id="3.30.540.10:FF:000002">
    <property type="entry name" value="Fructose-1,6-bisphosphatase class 1"/>
    <property type="match status" value="1"/>
</dbReference>
<dbReference type="FunFam" id="3.40.190.80:FF:000001">
    <property type="entry name" value="Fructose-1,6-bisphosphatase class 1"/>
    <property type="match status" value="1"/>
</dbReference>
<dbReference type="Gene3D" id="3.40.190.80">
    <property type="match status" value="1"/>
</dbReference>
<dbReference type="Gene3D" id="3.30.540.10">
    <property type="entry name" value="Fructose-1,6-Bisphosphatase, subunit A, domain 1"/>
    <property type="match status" value="1"/>
</dbReference>
<dbReference type="HAMAP" id="MF_01855">
    <property type="entry name" value="FBPase_class1"/>
    <property type="match status" value="1"/>
</dbReference>
<dbReference type="InterPro" id="IPR044015">
    <property type="entry name" value="FBPase_C_dom"/>
</dbReference>
<dbReference type="InterPro" id="IPR000146">
    <property type="entry name" value="FBPase_class-1"/>
</dbReference>
<dbReference type="InterPro" id="IPR033391">
    <property type="entry name" value="FBPase_N"/>
</dbReference>
<dbReference type="InterPro" id="IPR028343">
    <property type="entry name" value="FBPtase"/>
</dbReference>
<dbReference type="NCBIfam" id="NF006778">
    <property type="entry name" value="PRK09293.1-1"/>
    <property type="match status" value="1"/>
</dbReference>
<dbReference type="PANTHER" id="PTHR11556">
    <property type="entry name" value="FRUCTOSE-1,6-BISPHOSPHATASE-RELATED"/>
    <property type="match status" value="1"/>
</dbReference>
<dbReference type="PANTHER" id="PTHR11556:SF35">
    <property type="entry name" value="SEDOHEPTULOSE-1,7-BISPHOSPHATASE, CHLOROPLASTIC"/>
    <property type="match status" value="1"/>
</dbReference>
<dbReference type="Pfam" id="PF00316">
    <property type="entry name" value="FBPase"/>
    <property type="match status" value="1"/>
</dbReference>
<dbReference type="Pfam" id="PF18913">
    <property type="entry name" value="FBPase_C"/>
    <property type="match status" value="1"/>
</dbReference>
<dbReference type="PIRSF" id="PIRSF500210">
    <property type="entry name" value="FBPtase"/>
    <property type="match status" value="1"/>
</dbReference>
<dbReference type="PIRSF" id="PIRSF000904">
    <property type="entry name" value="FBPtase_SBPase"/>
    <property type="match status" value="1"/>
</dbReference>
<dbReference type="PRINTS" id="PR00115">
    <property type="entry name" value="F16BPHPHTASE"/>
</dbReference>
<dbReference type="SUPFAM" id="SSF56655">
    <property type="entry name" value="Carbohydrate phosphatase"/>
    <property type="match status" value="1"/>
</dbReference>
<comment type="catalytic activity">
    <reaction evidence="1">
        <text>beta-D-fructose 1,6-bisphosphate + H2O = beta-D-fructose 6-phosphate + phosphate</text>
        <dbReference type="Rhea" id="RHEA:11064"/>
        <dbReference type="ChEBI" id="CHEBI:15377"/>
        <dbReference type="ChEBI" id="CHEBI:32966"/>
        <dbReference type="ChEBI" id="CHEBI:43474"/>
        <dbReference type="ChEBI" id="CHEBI:57634"/>
        <dbReference type="EC" id="3.1.3.11"/>
    </reaction>
</comment>
<comment type="cofactor">
    <cofactor evidence="1">
        <name>Mg(2+)</name>
        <dbReference type="ChEBI" id="CHEBI:18420"/>
    </cofactor>
    <text evidence="1">Binds 2 magnesium ions per subunit.</text>
</comment>
<comment type="pathway">
    <text evidence="1">Carbohydrate biosynthesis; Calvin cycle.</text>
</comment>
<comment type="subunit">
    <text evidence="1">Homotetramer.</text>
</comment>
<comment type="subcellular location">
    <subcellularLocation>
        <location evidence="1">Cytoplasm</location>
    </subcellularLocation>
</comment>
<comment type="similarity">
    <text evidence="1">Belongs to the FBPase class 1 family.</text>
</comment>
<sequence>MSNLITIERHILEQQKFFPEAHGELTDLLTDVAFAAKLVRREVVRAGLVDILGLAGSTNVQGEEVKKLDLFANEQIISAIGAHGRFAVMGSEENEEIIIPTNNESGNYVLLFDPLDGSSNIDVNVSVGTIFSIYKLKTSDPAKASLADCLQAGSEQVAAGYVIYGSSVVMVYTTGHGVHGFTYDPTIGEFLLSDENITTPKRGKYYSMNEGSYAQFNEGTKRYLDYIKTEDKATNRPYSTRYIGSLVADFHRNLLTGGIFIYPPTGKHPNGKLRLMYEANPLAFICEQAGGRATNGKERILDIKPTELHQRTPLYIGSTDDVMVAEEFEQGKR</sequence>
<evidence type="ECO:0000255" key="1">
    <source>
        <dbReference type="HAMAP-Rule" id="MF_01855"/>
    </source>
</evidence>
<keyword id="KW-0113">Calvin cycle</keyword>
<keyword id="KW-0119">Carbohydrate metabolism</keyword>
<keyword id="KW-0963">Cytoplasm</keyword>
<keyword id="KW-0378">Hydrolase</keyword>
<keyword id="KW-0460">Magnesium</keyword>
<keyword id="KW-0479">Metal-binding</keyword>
<name>F16PA_CHLCH</name>
<organism>
    <name type="scientific">Chlorobium chlorochromatii (strain CaD3)</name>
    <dbReference type="NCBI Taxonomy" id="340177"/>
    <lineage>
        <taxon>Bacteria</taxon>
        <taxon>Pseudomonadati</taxon>
        <taxon>Chlorobiota</taxon>
        <taxon>Chlorobiia</taxon>
        <taxon>Chlorobiales</taxon>
        <taxon>Chlorobiaceae</taxon>
        <taxon>Chlorobium/Pelodictyon group</taxon>
        <taxon>Chlorobium</taxon>
    </lineage>
</organism>
<reference key="1">
    <citation type="submission" date="2005-08" db="EMBL/GenBank/DDBJ databases">
        <title>Complete sequence of Chlorobium chlorochromatii CaD3.</title>
        <authorList>
            <consortium name="US DOE Joint Genome Institute"/>
            <person name="Copeland A."/>
            <person name="Lucas S."/>
            <person name="Lapidus A."/>
            <person name="Barry K."/>
            <person name="Detter J.C."/>
            <person name="Glavina T."/>
            <person name="Hammon N."/>
            <person name="Israni S."/>
            <person name="Pitluck S."/>
            <person name="Bryant D."/>
            <person name="Schmutz J."/>
            <person name="Larimer F."/>
            <person name="Land M."/>
            <person name="Kyrpides N."/>
            <person name="Ivanova N."/>
            <person name="Richardson P."/>
        </authorList>
    </citation>
    <scope>NUCLEOTIDE SEQUENCE [LARGE SCALE GENOMIC DNA]</scope>
    <source>
        <strain>CaD3</strain>
    </source>
</reference>
<accession>Q3AT00</accession>